<dbReference type="EC" id="2.3.1.-" evidence="3"/>
<dbReference type="EMBL" id="EU253979">
    <property type="protein sequence ID" value="ACC64457.1"/>
    <property type="molecule type" value="Genomic_DNA"/>
</dbReference>
<dbReference type="GO" id="GO:0016746">
    <property type="term" value="F:acyltransferase activity"/>
    <property type="evidence" value="ECO:0007669"/>
    <property type="project" value="UniProtKB-KW"/>
</dbReference>
<dbReference type="Gene3D" id="3.40.630.30">
    <property type="match status" value="1"/>
</dbReference>
<dbReference type="InterPro" id="IPR016181">
    <property type="entry name" value="Acyl_CoA_acyltransferase"/>
</dbReference>
<dbReference type="SUPFAM" id="SSF55729">
    <property type="entry name" value="Acyl-CoA N-acyltransferases (Nat)"/>
    <property type="match status" value="1"/>
</dbReference>
<reference key="1">
    <citation type="journal article" date="2008" name="PLoS Pathog.">
        <title>Histoplasma requires SID1, a member of an iron-regulated siderophore gene cluster, for host colonization.</title>
        <authorList>
            <person name="Hwang L.H."/>
            <person name="Mayfield J.A."/>
            <person name="Rine J."/>
            <person name="Sil A."/>
        </authorList>
    </citation>
    <scope>NUCLEOTIDE SEQUENCE [GENOMIC DNA]</scope>
    <scope>FUNCTION</scope>
    <source>
        <strain>ATCC 26032 / G217B</strain>
    </source>
</reference>
<gene>
    <name evidence="2" type="primary">SID5</name>
</gene>
<evidence type="ECO:0000269" key="1">
    <source>
    </source>
</evidence>
<evidence type="ECO:0000303" key="2">
    <source>
    </source>
</evidence>
<evidence type="ECO:0000305" key="3">
    <source>
    </source>
</evidence>
<proteinExistence type="predicted"/>
<comment type="function">
    <text evidence="1">Probable acyltransferase; part of the gene cluster that mediates the biosynthesis of hydroxamate-containing siderophores that play a critical role in virulence via intracellular iron acquisition during macrophage infection (PubMed:18404210).</text>
</comment>
<comment type="pathway">
    <text evidence="3">Siderophore biosynthesis.</text>
</comment>
<name>SID5_AJECA</name>
<protein>
    <recommendedName>
        <fullName evidence="2">Probable acyltransferase SID5</fullName>
        <ecNumber evidence="3">2.3.1.-</ecNumber>
    </recommendedName>
    <alternativeName>
        <fullName evidence="2">Siderophore biosynthesis cluster protein SID5</fullName>
    </alternativeName>
</protein>
<accession>B2KWI4</accession>
<sequence length="136" mass="15116">MTVWEVHWRGEADGWQKNPTVAWLQGPEKEGAEKAFWAIWEVGDKLLNHRSAPGAPKKRGIGQLLIDWGLDVGEKLQVPVYLESTRAGLVFYTKLGFEKLSQGAVVKAEVTHVASDFELPVTVKMPSAARRMGFEG</sequence>
<feature type="chain" id="PRO_0000444412" description="Probable acyltransferase SID5">
    <location>
        <begin position="1"/>
        <end position="136"/>
    </location>
</feature>
<organism>
    <name type="scientific">Ajellomyces capsulatus</name>
    <name type="common">Darling's disease fungus</name>
    <name type="synonym">Histoplasma capsulatum</name>
    <dbReference type="NCBI Taxonomy" id="5037"/>
    <lineage>
        <taxon>Eukaryota</taxon>
        <taxon>Fungi</taxon>
        <taxon>Dikarya</taxon>
        <taxon>Ascomycota</taxon>
        <taxon>Pezizomycotina</taxon>
        <taxon>Eurotiomycetes</taxon>
        <taxon>Eurotiomycetidae</taxon>
        <taxon>Onygenales</taxon>
        <taxon>Ajellomycetaceae</taxon>
        <taxon>Histoplasma</taxon>
    </lineage>
</organism>
<keyword id="KW-0012">Acyltransferase</keyword>
<keyword id="KW-0808">Transferase</keyword>